<accession>Q39779</accession>
<keyword id="KW-0446">Lipid-binding</keyword>
<keyword id="KW-1185">Reference proteome</keyword>
<keyword id="KW-0813">Transport</keyword>
<proteinExistence type="inferred from homology"/>
<name>ACBP_GOSHI</name>
<dbReference type="EMBL" id="U35015">
    <property type="protein sequence ID" value="AAB67736.1"/>
    <property type="molecule type" value="mRNA"/>
</dbReference>
<dbReference type="PIR" id="T09842">
    <property type="entry name" value="T09842"/>
</dbReference>
<dbReference type="RefSeq" id="NP_001412954.1">
    <property type="nucleotide sequence ID" value="NM_001426025.1"/>
</dbReference>
<dbReference type="RefSeq" id="XP_016755542.1">
    <property type="nucleotide sequence ID" value="XM_016900053.1"/>
</dbReference>
<dbReference type="SMR" id="Q39779"/>
<dbReference type="STRING" id="3635.Q39779"/>
<dbReference type="PaxDb" id="3635-Q39779"/>
<dbReference type="GeneID" id="107963602"/>
<dbReference type="KEGG" id="ghi:107963602"/>
<dbReference type="OMA" id="IACPAML"/>
<dbReference type="Proteomes" id="UP000189702">
    <property type="component" value="Chromosome 2"/>
</dbReference>
<dbReference type="GO" id="GO:0000062">
    <property type="term" value="F:fatty-acyl-CoA binding"/>
    <property type="evidence" value="ECO:0000318"/>
    <property type="project" value="GO_Central"/>
</dbReference>
<dbReference type="GO" id="GO:0006631">
    <property type="term" value="P:fatty acid metabolic process"/>
    <property type="evidence" value="ECO:0000318"/>
    <property type="project" value="GO_Central"/>
</dbReference>
<dbReference type="CDD" id="cd00435">
    <property type="entry name" value="ACBP"/>
    <property type="match status" value="1"/>
</dbReference>
<dbReference type="FunFam" id="1.20.80.10:FF:000010">
    <property type="entry name" value="Acyl-CoA-binding domain-containing protein 5"/>
    <property type="match status" value="1"/>
</dbReference>
<dbReference type="Gene3D" id="1.20.80.10">
    <property type="match status" value="1"/>
</dbReference>
<dbReference type="InterPro" id="IPR022408">
    <property type="entry name" value="Acyl-CoA-binding_prot_CS"/>
</dbReference>
<dbReference type="InterPro" id="IPR000582">
    <property type="entry name" value="Acyl-CoA-binding_protein"/>
</dbReference>
<dbReference type="InterPro" id="IPR035984">
    <property type="entry name" value="Acyl-CoA-binding_sf"/>
</dbReference>
<dbReference type="InterPro" id="IPR014352">
    <property type="entry name" value="FERM/acyl-CoA-bd_prot_sf"/>
</dbReference>
<dbReference type="PANTHER" id="PTHR23310:SF134">
    <property type="entry name" value="ACYL-COA-BINDING PROTEIN"/>
    <property type="match status" value="1"/>
</dbReference>
<dbReference type="PANTHER" id="PTHR23310">
    <property type="entry name" value="ACYL-COA-BINDING PROTEIN, ACBP"/>
    <property type="match status" value="1"/>
</dbReference>
<dbReference type="Pfam" id="PF00887">
    <property type="entry name" value="ACBP"/>
    <property type="match status" value="1"/>
</dbReference>
<dbReference type="PRINTS" id="PR00689">
    <property type="entry name" value="ACOABINDINGP"/>
</dbReference>
<dbReference type="SUPFAM" id="SSF47027">
    <property type="entry name" value="Acyl-CoA binding protein"/>
    <property type="match status" value="1"/>
</dbReference>
<dbReference type="PROSITE" id="PS00880">
    <property type="entry name" value="ACB_1"/>
    <property type="match status" value="1"/>
</dbReference>
<dbReference type="PROSITE" id="PS51228">
    <property type="entry name" value="ACB_2"/>
    <property type="match status" value="1"/>
</dbReference>
<protein>
    <recommendedName>
        <fullName>Acyl-CoA-binding protein</fullName>
        <shortName>ACBP</shortName>
    </recommendedName>
</protein>
<sequence>MGLKEEFEEHAEKVKTLPAAPSNDDMLILYGLYKQATVGPVNTSRPGMFNMREKYKWDAWKAVEGKSKEEAMGDYITKVKQLFEAAGSS</sequence>
<organism>
    <name type="scientific">Gossypium hirsutum</name>
    <name type="common">Upland cotton</name>
    <name type="synonym">Gossypium mexicanum</name>
    <dbReference type="NCBI Taxonomy" id="3635"/>
    <lineage>
        <taxon>Eukaryota</taxon>
        <taxon>Viridiplantae</taxon>
        <taxon>Streptophyta</taxon>
        <taxon>Embryophyta</taxon>
        <taxon>Tracheophyta</taxon>
        <taxon>Spermatophyta</taxon>
        <taxon>Magnoliopsida</taxon>
        <taxon>eudicotyledons</taxon>
        <taxon>Gunneridae</taxon>
        <taxon>Pentapetalae</taxon>
        <taxon>rosids</taxon>
        <taxon>malvids</taxon>
        <taxon>Malvales</taxon>
        <taxon>Malvaceae</taxon>
        <taxon>Malvoideae</taxon>
        <taxon>Gossypium</taxon>
    </lineage>
</organism>
<evidence type="ECO:0000250" key="1"/>
<evidence type="ECO:0000255" key="2">
    <source>
        <dbReference type="PROSITE-ProRule" id="PRU00573"/>
    </source>
</evidence>
<evidence type="ECO:0000305" key="3"/>
<reference key="1">
    <citation type="online journal article" date="1996" name="Plant Gene Register">
        <title>A cDNA encoding acyl-CoA-binding protein from cotton.</title>
        <authorList>
            <person name="Reddy A.S."/>
            <person name="Ranganathan B."/>
            <person name="Haisler R.M."/>
            <person name="Swize M.A."/>
        </authorList>
        <locator>PGR96-028</locator>
    </citation>
    <scope>NUCLEOTIDE SEQUENCE [MRNA]</scope>
    <source>
        <strain>cv. Coker 312</strain>
    </source>
</reference>
<comment type="function">
    <text evidence="1">Binds medium- and long-chain acyl-CoA esters with very high affinity and may function as an intracellular carrier of acyl-CoA esters.</text>
</comment>
<comment type="similarity">
    <text evidence="3">Belongs to the ACBP family.</text>
</comment>
<feature type="chain" id="PRO_0000214021" description="Acyl-CoA-binding protein">
    <location>
        <begin position="1"/>
        <end position="89"/>
    </location>
</feature>
<feature type="domain" description="ACB" evidence="2">
    <location>
        <begin position="3"/>
        <end position="88"/>
    </location>
</feature>
<feature type="binding site" evidence="1">
    <location>
        <begin position="30"/>
        <end position="34"/>
    </location>
    <ligand>
        <name>an acyl-CoA</name>
        <dbReference type="ChEBI" id="CHEBI:58342"/>
    </ligand>
</feature>
<feature type="binding site" evidence="1">
    <location>
        <position position="56"/>
    </location>
    <ligand>
        <name>an acyl-CoA</name>
        <dbReference type="ChEBI" id="CHEBI:58342"/>
    </ligand>
</feature>
<feature type="binding site" evidence="1">
    <location>
        <position position="75"/>
    </location>
    <ligand>
        <name>an acyl-CoA</name>
        <dbReference type="ChEBI" id="CHEBI:58342"/>
    </ligand>
</feature>